<reference key="1">
    <citation type="journal article" date="2000" name="Nature">
        <title>The genome sequence of the thermoacidophilic scavenger Thermoplasma acidophilum.</title>
        <authorList>
            <person name="Ruepp A."/>
            <person name="Graml W."/>
            <person name="Santos-Martinez M.-L."/>
            <person name="Koretke K.K."/>
            <person name="Volker C."/>
            <person name="Mewes H.-W."/>
            <person name="Frishman D."/>
            <person name="Stocker S."/>
            <person name="Lupas A.N."/>
            <person name="Baumeister W."/>
        </authorList>
    </citation>
    <scope>NUCLEOTIDE SEQUENCE [LARGE SCALE GENOMIC DNA]</scope>
    <source>
        <strain>ATCC 25905 / DSM 1728 / JCM 9062 / NBRC 15155 / AMRC-C165</strain>
    </source>
</reference>
<protein>
    <recommendedName>
        <fullName evidence="3">Small ribosomal subunit protein eS8</fullName>
    </recommendedName>
    <alternativeName>
        <fullName>30S ribosomal protein S8e</fullName>
    </alternativeName>
</protein>
<keyword id="KW-1185">Reference proteome</keyword>
<keyword id="KW-0687">Ribonucleoprotein</keyword>
<keyword id="KW-0689">Ribosomal protein</keyword>
<feature type="chain" id="PRO_0000122282" description="Small ribosomal subunit protein eS8">
    <location>
        <begin position="1"/>
        <end position="127"/>
    </location>
</feature>
<feature type="region of interest" description="Disordered" evidence="2">
    <location>
        <begin position="1"/>
        <end position="31"/>
    </location>
</feature>
<comment type="subunit">
    <text evidence="1">Part of the 30S ribosomal subunit.</text>
</comment>
<comment type="similarity">
    <text evidence="3">Belongs to the eukaryotic ribosomal protein eS8 family.</text>
</comment>
<evidence type="ECO:0000250" key="1"/>
<evidence type="ECO:0000256" key="2">
    <source>
        <dbReference type="SAM" id="MobiDB-lite"/>
    </source>
</evidence>
<evidence type="ECO:0000305" key="3"/>
<dbReference type="EMBL" id="AL445066">
    <property type="protein sequence ID" value="CAC12168.1"/>
    <property type="molecule type" value="Genomic_DNA"/>
</dbReference>
<dbReference type="RefSeq" id="WP_010901451.1">
    <property type="nucleotide sequence ID" value="NC_002578.1"/>
</dbReference>
<dbReference type="SMR" id="Q9HJD0"/>
<dbReference type="FunCoup" id="Q9HJD0">
    <property type="interactions" value="52"/>
</dbReference>
<dbReference type="STRING" id="273075.gene:9572260"/>
<dbReference type="PaxDb" id="273075-Ta1040"/>
<dbReference type="EnsemblBacteria" id="CAC12168">
    <property type="protein sequence ID" value="CAC12168"/>
    <property type="gene ID" value="CAC12168"/>
</dbReference>
<dbReference type="KEGG" id="tac:Ta1040"/>
<dbReference type="eggNOG" id="arCOG04154">
    <property type="taxonomic scope" value="Archaea"/>
</dbReference>
<dbReference type="HOGENOM" id="CLU_080597_2_1_2"/>
<dbReference type="InParanoid" id="Q9HJD0"/>
<dbReference type="OrthoDB" id="372305at2157"/>
<dbReference type="Proteomes" id="UP000001024">
    <property type="component" value="Chromosome"/>
</dbReference>
<dbReference type="GO" id="GO:1990904">
    <property type="term" value="C:ribonucleoprotein complex"/>
    <property type="evidence" value="ECO:0007669"/>
    <property type="project" value="UniProtKB-KW"/>
</dbReference>
<dbReference type="GO" id="GO:0005840">
    <property type="term" value="C:ribosome"/>
    <property type="evidence" value="ECO:0007669"/>
    <property type="project" value="UniProtKB-KW"/>
</dbReference>
<dbReference type="GO" id="GO:0003735">
    <property type="term" value="F:structural constituent of ribosome"/>
    <property type="evidence" value="ECO:0007669"/>
    <property type="project" value="InterPro"/>
</dbReference>
<dbReference type="GO" id="GO:0006412">
    <property type="term" value="P:translation"/>
    <property type="evidence" value="ECO:0007669"/>
    <property type="project" value="UniProtKB-UniRule"/>
</dbReference>
<dbReference type="CDD" id="cd11382">
    <property type="entry name" value="Ribosomal_S8e"/>
    <property type="match status" value="1"/>
</dbReference>
<dbReference type="Gene3D" id="2.40.10.310">
    <property type="match status" value="1"/>
</dbReference>
<dbReference type="HAMAP" id="MF_00029">
    <property type="entry name" value="Ribosomal_eS8"/>
    <property type="match status" value="1"/>
</dbReference>
<dbReference type="InterPro" id="IPR001047">
    <property type="entry name" value="Ribosomal_eS8"/>
</dbReference>
<dbReference type="InterPro" id="IPR018283">
    <property type="entry name" value="Ribosomal_eS8_CS"/>
</dbReference>
<dbReference type="InterPro" id="IPR020919">
    <property type="entry name" value="Ribosomal_protein_eS8_arc"/>
</dbReference>
<dbReference type="InterPro" id="IPR022309">
    <property type="entry name" value="Ribosomal_Se8/biogenesis_NSA2"/>
</dbReference>
<dbReference type="NCBIfam" id="TIGR00307">
    <property type="entry name" value="eS8"/>
    <property type="match status" value="1"/>
</dbReference>
<dbReference type="PANTHER" id="PTHR10394">
    <property type="entry name" value="40S RIBOSOMAL PROTEIN S8"/>
    <property type="match status" value="1"/>
</dbReference>
<dbReference type="Pfam" id="PF01201">
    <property type="entry name" value="Ribosomal_S8e"/>
    <property type="match status" value="1"/>
</dbReference>
<dbReference type="PROSITE" id="PS01193">
    <property type="entry name" value="RIBOSOMAL_S8E"/>
    <property type="match status" value="1"/>
</dbReference>
<accession>Q9HJD0</accession>
<sequence length="127" mass="13855">MTIFQGKSGKKATGGSLKQSRKKRRFELGREPTLTKLGTKTERKVIRTMGGNTKVILFTAETANVYDASEKKIKKAKIITVKANPANSHYVQRNIINKGTVIATEIGDAVVTSRPGQDGVINAKLLK</sequence>
<organism>
    <name type="scientific">Thermoplasma acidophilum (strain ATCC 25905 / DSM 1728 / JCM 9062 / NBRC 15155 / AMRC-C165)</name>
    <dbReference type="NCBI Taxonomy" id="273075"/>
    <lineage>
        <taxon>Archaea</taxon>
        <taxon>Methanobacteriati</taxon>
        <taxon>Thermoplasmatota</taxon>
        <taxon>Thermoplasmata</taxon>
        <taxon>Thermoplasmatales</taxon>
        <taxon>Thermoplasmataceae</taxon>
        <taxon>Thermoplasma</taxon>
    </lineage>
</organism>
<proteinExistence type="inferred from homology"/>
<gene>
    <name type="primary">rps8e</name>
    <name type="ordered locus">Ta1040</name>
</gene>
<name>RS8E_THEAC</name>